<dbReference type="EMBL" id="AJ294725">
    <property type="protein sequence ID" value="CAC24609.1"/>
    <property type="molecule type" value="Genomic_DNA"/>
</dbReference>
<dbReference type="PIR" id="S14922">
    <property type="entry name" value="R3IT7"/>
</dbReference>
<dbReference type="RefSeq" id="NP_074998.1">
    <property type="nucleotide sequence ID" value="NC_002652.1"/>
</dbReference>
<dbReference type="SMR" id="P14760"/>
<dbReference type="GeneID" id="802524"/>
<dbReference type="GO" id="GO:0009536">
    <property type="term" value="C:plastid"/>
    <property type="evidence" value="ECO:0007669"/>
    <property type="project" value="UniProtKB-SubCell"/>
</dbReference>
<dbReference type="GO" id="GO:0015935">
    <property type="term" value="C:small ribosomal subunit"/>
    <property type="evidence" value="ECO:0007669"/>
    <property type="project" value="InterPro"/>
</dbReference>
<dbReference type="GO" id="GO:0019843">
    <property type="term" value="F:rRNA binding"/>
    <property type="evidence" value="ECO:0007669"/>
    <property type="project" value="UniProtKB-KW"/>
</dbReference>
<dbReference type="GO" id="GO:0003735">
    <property type="term" value="F:structural constituent of ribosome"/>
    <property type="evidence" value="ECO:0007669"/>
    <property type="project" value="InterPro"/>
</dbReference>
<dbReference type="GO" id="GO:0006412">
    <property type="term" value="P:translation"/>
    <property type="evidence" value="ECO:0007669"/>
    <property type="project" value="InterPro"/>
</dbReference>
<dbReference type="Gene3D" id="1.10.455.10">
    <property type="entry name" value="Ribosomal protein S7 domain"/>
    <property type="match status" value="1"/>
</dbReference>
<dbReference type="HAMAP" id="MF_00480_B">
    <property type="entry name" value="Ribosomal_uS7_B"/>
    <property type="match status" value="1"/>
</dbReference>
<dbReference type="InterPro" id="IPR000235">
    <property type="entry name" value="Ribosomal_uS7"/>
</dbReference>
<dbReference type="InterPro" id="IPR005717">
    <property type="entry name" value="Ribosomal_uS7_bac/org-type"/>
</dbReference>
<dbReference type="InterPro" id="IPR020606">
    <property type="entry name" value="Ribosomal_uS7_CS"/>
</dbReference>
<dbReference type="InterPro" id="IPR023798">
    <property type="entry name" value="Ribosomal_uS7_dom"/>
</dbReference>
<dbReference type="InterPro" id="IPR036823">
    <property type="entry name" value="Ribosomal_uS7_dom_sf"/>
</dbReference>
<dbReference type="PANTHER" id="PTHR11205">
    <property type="entry name" value="RIBOSOMAL PROTEIN S7"/>
    <property type="match status" value="1"/>
</dbReference>
<dbReference type="Pfam" id="PF00177">
    <property type="entry name" value="Ribosomal_S7"/>
    <property type="match status" value="1"/>
</dbReference>
<dbReference type="PIRSF" id="PIRSF002122">
    <property type="entry name" value="RPS7p_RPS7a_RPS5e_RPS7o"/>
    <property type="match status" value="1"/>
</dbReference>
<dbReference type="SUPFAM" id="SSF47973">
    <property type="entry name" value="Ribosomal protein S7"/>
    <property type="match status" value="1"/>
</dbReference>
<dbReference type="PROSITE" id="PS00052">
    <property type="entry name" value="RIBOSOMAL_S7"/>
    <property type="match status" value="1"/>
</dbReference>
<accession>P14760</accession>
<geneLocation type="non-photosynthetic plastid"/>
<gene>
    <name type="primary">rps7</name>
</gene>
<comment type="function">
    <text evidence="1">One of the primary rRNA binding proteins, it binds directly to 16S rRNA where it nucleates assembly of the head domain of the 30S subunit.</text>
</comment>
<comment type="subunit">
    <text>Part of the 30S ribosomal subunit.</text>
</comment>
<comment type="subcellular location">
    <subcellularLocation>
        <location>Plastid</location>
    </subcellularLocation>
</comment>
<comment type="similarity">
    <text evidence="3">Belongs to the universal ribosomal protein uS7 family.</text>
</comment>
<name>RR7_EUGLO</name>
<reference key="1">
    <citation type="journal article" date="1990" name="Mol. Gen. Genet.">
        <title>Genes for the plastid elongation factor Tu and ribosomal protein S7 and six tRNA genes on the 73 kb DNA from Astasia longa that resembles the chloroplast DNA of Euglena.</title>
        <authorList>
            <person name="Siemeister G."/>
            <person name="Buchholz C."/>
            <person name="Hachtel W."/>
        </authorList>
    </citation>
    <scope>NUCLEOTIDE SEQUENCE [GENOMIC DNA]</scope>
    <source>
        <strain>CCAP 1204-17a</strain>
    </source>
</reference>
<reference key="2">
    <citation type="journal article" date="1994" name="Plant Physiol.">
        <title>Plastid ribosomal protein genes from the nonphotosynthetic flagellate Astasia longa.</title>
        <authorList>
            <person name="Gockel G."/>
            <person name="Baier S."/>
            <person name="Hachtel W."/>
        </authorList>
    </citation>
    <scope>NUCLEOTIDE SEQUENCE [GENOMIC DNA]</scope>
    <source>
        <strain>CCAP 1204-17a</strain>
    </source>
</reference>
<reference key="3">
    <citation type="journal article" date="2000" name="Protist">
        <title>Complete gene map of the plastid genome of the nonphotosynthetic euglenoid flagellate Astasia longa.</title>
        <authorList>
            <person name="Gockel G."/>
            <person name="Hachtel W."/>
        </authorList>
    </citation>
    <scope>NUCLEOTIDE SEQUENCE [LARGE SCALE GENOMIC DNA]</scope>
    <source>
        <strain>CCAP 1204-17a</strain>
    </source>
</reference>
<sequence>MSTRKLQKRKILPNDSIYNSLLVSQTINKILSKGKKNIARYIFYKSMQNIEKIKNENPLDIFKKAVDNATPSIELRTQKRKKGQISKISIKTKLERRNKIALKFIINSAKKRSEKNIIQKLQGEILDAYNNTGAAVQKKEEIEKSKSPVNNNKKFISKNKKSKNKKQKKRLKRKKNIY</sequence>
<evidence type="ECO:0000250" key="1"/>
<evidence type="ECO:0000256" key="2">
    <source>
        <dbReference type="SAM" id="MobiDB-lite"/>
    </source>
</evidence>
<evidence type="ECO:0000305" key="3"/>
<feature type="chain" id="PRO_0000124429" description="Small ribosomal subunit protein uS7c">
    <location>
        <begin position="1"/>
        <end position="178"/>
    </location>
</feature>
<feature type="region of interest" description="Disordered" evidence="2">
    <location>
        <begin position="137"/>
        <end position="178"/>
    </location>
</feature>
<feature type="compositionally biased region" description="Basic and acidic residues" evidence="2">
    <location>
        <begin position="137"/>
        <end position="146"/>
    </location>
</feature>
<feature type="compositionally biased region" description="Basic residues" evidence="2">
    <location>
        <begin position="155"/>
        <end position="178"/>
    </location>
</feature>
<keyword id="KW-0934">Plastid</keyword>
<keyword id="KW-0687">Ribonucleoprotein</keyword>
<keyword id="KW-0689">Ribosomal protein</keyword>
<keyword id="KW-0694">RNA-binding</keyword>
<keyword id="KW-0699">rRNA-binding</keyword>
<organism>
    <name type="scientific">Euglena longa</name>
    <name type="common">Euglenophycean alga</name>
    <name type="synonym">Astasia longa</name>
    <dbReference type="NCBI Taxonomy" id="3037"/>
    <lineage>
        <taxon>Eukaryota</taxon>
        <taxon>Discoba</taxon>
        <taxon>Euglenozoa</taxon>
        <taxon>Euglenida</taxon>
        <taxon>Spirocuta</taxon>
        <taxon>Euglenophyceae</taxon>
        <taxon>Euglenales</taxon>
        <taxon>Euglenaceae</taxon>
        <taxon>Euglena</taxon>
    </lineage>
</organism>
<protein>
    <recommendedName>
        <fullName evidence="3">Small ribosomal subunit protein uS7c</fullName>
    </recommendedName>
    <alternativeName>
        <fullName>30S ribosomal protein S7, plastid</fullName>
    </alternativeName>
</protein>
<proteinExistence type="inferred from homology"/>